<gene>
    <name evidence="2" type="primary">PA</name>
</gene>
<organismHost>
    <name type="scientific">Aves</name>
    <dbReference type="NCBI Taxonomy" id="8782"/>
</organismHost>
<organismHost>
    <name type="scientific">Homo sapiens</name>
    <name type="common">Human</name>
    <dbReference type="NCBI Taxonomy" id="9606"/>
</organismHost>
<accession>Q1K9Q4</accession>
<protein>
    <recommendedName>
        <fullName evidence="2">Polymerase acidic protein</fullName>
        <ecNumber evidence="2">3.1.-.-</ecNumber>
    </recommendedName>
    <alternativeName>
        <fullName evidence="2">RNA-directed RNA polymerase subunit P2</fullName>
    </alternativeName>
</protein>
<comment type="function">
    <text evidence="2">Plays an essential role in viral RNA transcription and replication by forming the heterotrimeric polymerase complex together with PB1 and PB2 subunits. The complex transcribes viral mRNAs by using a unique mechanism called cap-snatching. It consists in the hijacking and cleavage of host capped pre-mRNAs. These short capped RNAs are then used as primers for viral mRNAs. The PB2 subunit is responsible for the binding of the 5' cap of cellular pre-mRNAs which are subsequently cleaved after 10-13 nucleotides by the PA subunit that carries the endonuclease activity.</text>
</comment>
<comment type="cofactor">
    <cofactor evidence="2">
        <name>Mn(2+)</name>
        <dbReference type="ChEBI" id="CHEBI:29035"/>
    </cofactor>
    <text evidence="2">Binds 2 manganese ions per subunit.</text>
</comment>
<comment type="subunit">
    <text evidence="1 2">Influenza RNA polymerase is composed of three subunits: PB1, PB2 and PA. Interacts (via C-terminus) with PB1 (via N-terminus).</text>
</comment>
<comment type="subcellular location">
    <subcellularLocation>
        <location evidence="2">Host cytoplasm</location>
    </subcellularLocation>
    <subcellularLocation>
        <location evidence="2">Host nucleus</location>
    </subcellularLocation>
    <text evidence="1 2">PB1 and PA are transported in the host nucleus as a complex.</text>
</comment>
<comment type="alternative products">
    <event type="ribosomal frameshifting"/>
    <isoform>
        <id>Q1K9Q4-1</id>
        <name>PA</name>
        <sequence type="displayed"/>
    </isoform>
    <isoform>
        <id>P0DJS1-1</id>
        <name>PA-X</name>
        <sequence type="external"/>
    </isoform>
</comment>
<comment type="PTM">
    <text evidence="1 2">Phosphorylated on serines and threonines by host kinases, including human casein kinase II.</text>
</comment>
<comment type="similarity">
    <text evidence="2">Belongs to the influenza viruses PA family.</text>
</comment>
<reference key="1">
    <citation type="submission" date="2006-04" db="EMBL/GenBank/DDBJ databases">
        <title>Complete genome sequencing and analysis of selected influenza virus vaccine strains spanning six decades (1933-1999).</title>
        <authorList>
            <person name="Mbawuike I.N."/>
            <person name="Zhang Y."/>
            <person name="Yamada R.E."/>
            <person name="Nino D."/>
            <person name="Bui H.-H."/>
            <person name="Sette A."/>
            <person name="Couch R.B."/>
        </authorList>
    </citation>
    <scope>NUCLEOTIDE SEQUENCE [GENOMIC RNA]</scope>
</reference>
<proteinExistence type="inferred from homology"/>
<dbReference type="EC" id="3.1.-.-" evidence="2"/>
<dbReference type="EMBL" id="DQ508840">
    <property type="protein sequence ID" value="ABF21256.1"/>
    <property type="molecule type" value="Genomic_RNA"/>
</dbReference>
<dbReference type="SMR" id="Q1K9Q4"/>
<dbReference type="MEROPS" id="S62.001"/>
<dbReference type="Proteomes" id="UP000118104">
    <property type="component" value="Genome"/>
</dbReference>
<dbReference type="GO" id="GO:0030430">
    <property type="term" value="C:host cell cytoplasm"/>
    <property type="evidence" value="ECO:0007669"/>
    <property type="project" value="UniProtKB-SubCell"/>
</dbReference>
<dbReference type="GO" id="GO:0042025">
    <property type="term" value="C:host cell nucleus"/>
    <property type="evidence" value="ECO:0007669"/>
    <property type="project" value="UniProtKB-SubCell"/>
</dbReference>
<dbReference type="GO" id="GO:0004519">
    <property type="term" value="F:endonuclease activity"/>
    <property type="evidence" value="ECO:0007669"/>
    <property type="project" value="UniProtKB-KW"/>
</dbReference>
<dbReference type="GO" id="GO:0046872">
    <property type="term" value="F:metal ion binding"/>
    <property type="evidence" value="ECO:0007669"/>
    <property type="project" value="UniProtKB-KW"/>
</dbReference>
<dbReference type="GO" id="GO:0003723">
    <property type="term" value="F:RNA binding"/>
    <property type="evidence" value="ECO:0007669"/>
    <property type="project" value="UniProtKB-UniRule"/>
</dbReference>
<dbReference type="GO" id="GO:0075526">
    <property type="term" value="P:cap snatching"/>
    <property type="evidence" value="ECO:0007669"/>
    <property type="project" value="UniProtKB-UniRule"/>
</dbReference>
<dbReference type="GO" id="GO:0006351">
    <property type="term" value="P:DNA-templated transcription"/>
    <property type="evidence" value="ECO:0007669"/>
    <property type="project" value="UniProtKB-UniRule"/>
</dbReference>
<dbReference type="GO" id="GO:0039657">
    <property type="term" value="P:symbiont-mediated suppression of host gene expression"/>
    <property type="evidence" value="ECO:0007669"/>
    <property type="project" value="UniProtKB-KW"/>
</dbReference>
<dbReference type="GO" id="GO:0039523">
    <property type="term" value="P:symbiont-mediated suppression of host mRNA transcription via inhibition of RNA polymerase II activity"/>
    <property type="evidence" value="ECO:0007669"/>
    <property type="project" value="UniProtKB-UniRule"/>
</dbReference>
<dbReference type="GO" id="GO:0039694">
    <property type="term" value="P:viral RNA genome replication"/>
    <property type="evidence" value="ECO:0007669"/>
    <property type="project" value="InterPro"/>
</dbReference>
<dbReference type="GO" id="GO:0075523">
    <property type="term" value="P:viral translational frameshifting"/>
    <property type="evidence" value="ECO:0007669"/>
    <property type="project" value="UniProtKB-KW"/>
</dbReference>
<dbReference type="FunFam" id="3.40.91.90:FF:000001">
    <property type="entry name" value="Polymerase acidic protein"/>
    <property type="match status" value="1"/>
</dbReference>
<dbReference type="Gene3D" id="3.40.91.90">
    <property type="entry name" value="Influenza RNA-dependent RNA polymerase subunit PA, endonuclease domain"/>
    <property type="match status" value="1"/>
</dbReference>
<dbReference type="HAMAP" id="MF_04063">
    <property type="entry name" value="INFV_PA"/>
    <property type="match status" value="1"/>
</dbReference>
<dbReference type="InterPro" id="IPR037534">
    <property type="entry name" value="INFV_PA"/>
</dbReference>
<dbReference type="InterPro" id="IPR001009">
    <property type="entry name" value="PA/PA-X"/>
</dbReference>
<dbReference type="InterPro" id="IPR038372">
    <property type="entry name" value="PA/PA-X_sf"/>
</dbReference>
<dbReference type="Pfam" id="PF00603">
    <property type="entry name" value="Flu_PA"/>
    <property type="match status" value="1"/>
</dbReference>
<keyword id="KW-1157">Cap snatching</keyword>
<keyword id="KW-0255">Endonuclease</keyword>
<keyword id="KW-1262">Eukaryotic host gene expression shutoff by virus</keyword>
<keyword id="KW-1191">Eukaryotic host transcription shutoff by virus</keyword>
<keyword id="KW-1035">Host cytoplasm</keyword>
<keyword id="KW-1190">Host gene expression shutoff by virus</keyword>
<keyword id="KW-1048">Host nucleus</keyword>
<keyword id="KW-0945">Host-virus interaction</keyword>
<keyword id="KW-0378">Hydrolase</keyword>
<keyword id="KW-1104">Inhibition of host RNA polymerase II by virus</keyword>
<keyword id="KW-0464">Manganese</keyword>
<keyword id="KW-0479">Metal-binding</keyword>
<keyword id="KW-0540">Nuclease</keyword>
<keyword id="KW-0597">Phosphoprotein</keyword>
<keyword id="KW-0688">Ribosomal frameshifting</keyword>
<organism>
    <name type="scientific">Influenza A virus (strain A/Japan/305/1957 H2N2)</name>
    <dbReference type="NCBI Taxonomy" id="387161"/>
    <lineage>
        <taxon>Viruses</taxon>
        <taxon>Riboviria</taxon>
        <taxon>Orthornavirae</taxon>
        <taxon>Negarnaviricota</taxon>
        <taxon>Polyploviricotina</taxon>
        <taxon>Insthoviricetes</taxon>
        <taxon>Articulavirales</taxon>
        <taxon>Orthomyxoviridae</taxon>
        <taxon>Alphainfluenzavirus</taxon>
        <taxon>Alphainfluenzavirus influenzae</taxon>
        <taxon>Influenza A virus</taxon>
    </lineage>
</organism>
<feature type="chain" id="PRO_0000279251" description="Polymerase acidic protein">
    <location>
        <begin position="1"/>
        <end position="716"/>
    </location>
</feature>
<feature type="short sequence motif" description="Nuclear localization signal 1 (NLS1)" evidence="1 2">
    <location>
        <begin position="124"/>
        <end position="139"/>
    </location>
</feature>
<feature type="short sequence motif" description="Nuclear localization signal 2 (NLS2)" evidence="1 2">
    <location>
        <begin position="184"/>
        <end position="247"/>
    </location>
</feature>
<feature type="binding site" evidence="2">
    <location>
        <position position="41"/>
    </location>
    <ligand>
        <name>Mn(2+)</name>
        <dbReference type="ChEBI" id="CHEBI:29035"/>
        <label>1</label>
    </ligand>
</feature>
<feature type="binding site" evidence="2">
    <location>
        <position position="80"/>
    </location>
    <ligand>
        <name>Mn(2+)</name>
        <dbReference type="ChEBI" id="CHEBI:29035"/>
        <label>2</label>
    </ligand>
</feature>
<feature type="binding site" evidence="2">
    <location>
        <position position="108"/>
    </location>
    <ligand>
        <name>Mn(2+)</name>
        <dbReference type="ChEBI" id="CHEBI:29035"/>
        <label>1</label>
    </ligand>
</feature>
<feature type="binding site" evidence="2">
    <location>
        <position position="108"/>
    </location>
    <ligand>
        <name>Mn(2+)</name>
        <dbReference type="ChEBI" id="CHEBI:29035"/>
        <label>2</label>
    </ligand>
</feature>
<feature type="binding site" evidence="2">
    <location>
        <position position="119"/>
    </location>
    <ligand>
        <name>Mn(2+)</name>
        <dbReference type="ChEBI" id="CHEBI:29035"/>
        <label>1</label>
    </ligand>
</feature>
<feature type="binding site" evidence="2">
    <location>
        <position position="120"/>
    </location>
    <ligand>
        <name>Mn(2+)</name>
        <dbReference type="ChEBI" id="CHEBI:29035"/>
        <label>1</label>
    </ligand>
</feature>
<evidence type="ECO:0000250" key="1">
    <source>
        <dbReference type="UniProtKB" id="P03433"/>
    </source>
</evidence>
<evidence type="ECO:0000255" key="2">
    <source>
        <dbReference type="HAMAP-Rule" id="MF_04063"/>
    </source>
</evidence>
<name>PA_I57A0</name>
<sequence>MEDFVRQCFNPMIVELAEKAMKEYGEDPKIETNKFAAICTHLEVCFMYSDFHFINEQGESIIVELDDPNALLKHRFEIIEGRDRTMAWTVVNSICNTTGAEKPKFLPDLYDYKENRFIEIGVTRREVHIYYLEKANKIKSEKTHIHIFSFTGEEMATKADYTLDEESRARIKTRLFTIRQEMASRGLWDSFRQSERGEETIEERFEITGTMRRLADQSLPPNFSCLENFRAYVDGFEPNGYIEGKLSQMSKEVNAKIEPFLKTTPRPIRLPDGPPCSQRSKFLLMDALKLSIEDPSHEGEGIPLYDAIKCMRTFFGWKEPYVVKPHEKGINPNYLLSWKQVLAELQDIENEEKIPRTKNMKKTSQLKWALGENMAPEKVDFDDCRDIGDLKQYDSDEPELRSLSSWIQNEFNKACELTDSIWIELDEIGEDVAPIEHIASMRRNYFTAEVSHCRATEYIMKGVYINTALLNASCAAMDDFQLIPMISKCRTKEGRRKTNLYGFIIKGRSHLRNDTDVVNFVSMEFSLTDPRLEPHKWEKYCVLEIGDMLLRSAIGQVSRPMFLYVRTNGTSKIKMKWGMEMRRCLLQSLQQIESMIEAESSVKEKDMTKEFFENKSETWPIGESPKGVEEGSIGKVCRTLLAKSVFNSLYASPQLEGFSAESRKLLLVVQALRDNLEPGTFDLGGLYEAIEECLINDPWVLLNASWFNSFLTHALR</sequence>